<organism>
    <name type="scientific">Pseudomonas putida</name>
    <name type="common">Arthrobacter siderocapsulatus</name>
    <dbReference type="NCBI Taxonomy" id="303"/>
    <lineage>
        <taxon>Bacteria</taxon>
        <taxon>Pseudomonadati</taxon>
        <taxon>Pseudomonadota</taxon>
        <taxon>Gammaproteobacteria</taxon>
        <taxon>Pseudomonadales</taxon>
        <taxon>Pseudomonadaceae</taxon>
        <taxon>Pseudomonas</taxon>
    </lineage>
</organism>
<reference key="1">
    <citation type="journal article" date="1993" name="Mol. Microbiol.">
        <title>Identification and characterization of the exbB, exbD and tonB genes of Pseudomonas putida WCS358: their involvement in ferric-pseudobactin transport.</title>
        <authorList>
            <person name="Bitter W."/>
            <person name="Tommassen J."/>
            <person name="Weisbeek P.J."/>
        </authorList>
    </citation>
    <scope>NUCLEOTIDE SEQUENCE [GENOMIC DNA]</scope>
    <source>
        <strain>WCS358</strain>
    </source>
</reference>
<comment type="function">
    <text evidence="1">Involved in the TonB-dependent energy-dependent transport of various receptor-bound substrates. Protects ExbD from proteolytic degradation and functionally stabilizes TonB (By similarity).</text>
</comment>
<comment type="subunit">
    <text>The accessory proteins ExbB and ExbD seem to form a complex with TonB.</text>
</comment>
<comment type="subcellular location">
    <subcellularLocation>
        <location>Cell inner membrane</location>
        <topology>Multi-pass membrane protein</topology>
    </subcellularLocation>
</comment>
<comment type="similarity">
    <text evidence="3">Belongs to the ExbB/TolQ family.</text>
</comment>
<gene>
    <name type="primary">exbB</name>
</gene>
<keyword id="KW-0997">Cell inner membrane</keyword>
<keyword id="KW-1003">Cell membrane</keyword>
<keyword id="KW-0472">Membrane</keyword>
<keyword id="KW-0653">Protein transport</keyword>
<keyword id="KW-0677">Repeat</keyword>
<keyword id="KW-0812">Transmembrane</keyword>
<keyword id="KW-1133">Transmembrane helix</keyword>
<keyword id="KW-0813">Transport</keyword>
<sequence length="329" mass="33929">MTRTQPSASPTPSRAWRAIAALMFSLVLAPVAMADEPTANASTPAAAAAPATPAAAPAPAADGSAPVADAPAAAPVDAPVAVDPGVEALVEDTTLGMAHDLSPWGMYKNADIVVKIVMIGLAIASIITWTIWIAKGFELMGAKRRLRGEIAQLKKSASLKEASEVSNKEGTLAHTLVHDALEEMRLSANTREKEGIKERVAFRLERLVAASGRNMSSGTGVLATIGSTAPFVGLFGTVWGIMNSFIGIAKTQTTNLAVVAPGIAEALLATALGLVAAIPAVVIYNVFARSIAGYKAQVSDASAQVLLLVSRDLDHQGSERAAPHMVKVG</sequence>
<proteinExistence type="inferred from homology"/>
<name>EXBB_PSEPU</name>
<dbReference type="EMBL" id="X70139">
    <property type="protein sequence ID" value="CAA49714.1"/>
    <property type="molecule type" value="Genomic_DNA"/>
</dbReference>
<dbReference type="PIR" id="S28442">
    <property type="entry name" value="S28442"/>
</dbReference>
<dbReference type="SMR" id="Q05605"/>
<dbReference type="GO" id="GO:0005886">
    <property type="term" value="C:plasma membrane"/>
    <property type="evidence" value="ECO:0007669"/>
    <property type="project" value="UniProtKB-SubCell"/>
</dbReference>
<dbReference type="GO" id="GO:0022857">
    <property type="term" value="F:transmembrane transporter activity"/>
    <property type="evidence" value="ECO:0007669"/>
    <property type="project" value="InterPro"/>
</dbReference>
<dbReference type="GO" id="GO:0017038">
    <property type="term" value="P:protein import"/>
    <property type="evidence" value="ECO:0007669"/>
    <property type="project" value="TreeGrafter"/>
</dbReference>
<dbReference type="InterPro" id="IPR050790">
    <property type="entry name" value="ExbB/TolQ_transport"/>
</dbReference>
<dbReference type="InterPro" id="IPR002898">
    <property type="entry name" value="MotA_ExbB_proton_chnl"/>
</dbReference>
<dbReference type="InterPro" id="IPR014164">
    <property type="entry name" value="TonB_ExbB_1"/>
</dbReference>
<dbReference type="NCBIfam" id="TIGR02797">
    <property type="entry name" value="exbB"/>
    <property type="match status" value="1"/>
</dbReference>
<dbReference type="PANTHER" id="PTHR30625:SF16">
    <property type="entry name" value="BIOPOLYMER TRANSPORT PROTEIN EXBB"/>
    <property type="match status" value="1"/>
</dbReference>
<dbReference type="PANTHER" id="PTHR30625">
    <property type="entry name" value="PROTEIN TOLQ"/>
    <property type="match status" value="1"/>
</dbReference>
<dbReference type="Pfam" id="PF01618">
    <property type="entry name" value="MotA_ExbB"/>
    <property type="match status" value="1"/>
</dbReference>
<feature type="chain" id="PRO_0000145810" description="Biopolymer transport protein ExbB">
    <location>
        <begin position="1"/>
        <end position="329"/>
    </location>
</feature>
<feature type="topological domain" description="Cytoplasmic" evidence="2">
    <location>
        <begin position="1"/>
        <end position="17"/>
    </location>
</feature>
<feature type="transmembrane region" description="Helical" evidence="2">
    <location>
        <begin position="18"/>
        <end position="34"/>
    </location>
</feature>
<feature type="topological domain" description="Periplasmic" evidence="2">
    <location>
        <begin position="35"/>
        <end position="111"/>
    </location>
</feature>
<feature type="transmembrane region" description="Helical" evidence="2">
    <location>
        <begin position="112"/>
        <end position="134"/>
    </location>
</feature>
<feature type="topological domain" description="Cytoplasmic" evidence="2">
    <location>
        <begin position="135"/>
        <end position="219"/>
    </location>
</feature>
<feature type="transmembrane region" description="Helical" evidence="2">
    <location>
        <begin position="220"/>
        <end position="241"/>
    </location>
</feature>
<feature type="topological domain" description="Periplasmic" evidence="2">
    <location>
        <begin position="242"/>
        <end position="265"/>
    </location>
</feature>
<feature type="transmembrane region" description="Helical" evidence="2">
    <location>
        <begin position="266"/>
        <end position="287"/>
    </location>
</feature>
<feature type="topological domain" description="Cytoplasmic" evidence="2">
    <location>
        <begin position="288"/>
        <end position="329"/>
    </location>
</feature>
<feature type="repeat" description="1">
    <location>
        <begin position="30"/>
        <end position="34"/>
    </location>
</feature>
<feature type="repeat" description="2; approximate">
    <location>
        <begin position="37"/>
        <end position="41"/>
    </location>
</feature>
<feature type="repeat" description="3">
    <location>
        <begin position="44"/>
        <end position="48"/>
    </location>
</feature>
<feature type="repeat" description="4">
    <location>
        <begin position="53"/>
        <end position="57"/>
    </location>
</feature>
<feature type="repeat" description="5; approximate">
    <location>
        <begin position="59"/>
        <end position="63"/>
    </location>
</feature>
<feature type="repeat" description="6">
    <location>
        <begin position="66"/>
        <end position="70"/>
    </location>
</feature>
<feature type="repeat" description="7">
    <location>
        <begin position="71"/>
        <end position="75"/>
    </location>
</feature>
<feature type="repeat" description="8; approximate">
    <location>
        <begin position="79"/>
        <end position="83"/>
    </location>
</feature>
<feature type="region of interest" description="8 X 5 AA repeats of P-[AV]-A-X-[AP]">
    <location>
        <begin position="30"/>
        <end position="83"/>
    </location>
</feature>
<evidence type="ECO:0000250" key="1"/>
<evidence type="ECO:0000255" key="2"/>
<evidence type="ECO:0000305" key="3"/>
<protein>
    <recommendedName>
        <fullName>Biopolymer transport protein ExbB</fullName>
    </recommendedName>
</protein>
<accession>Q05605</accession>